<keyword id="KW-0378">Hydrolase</keyword>
<keyword id="KW-0460">Magnesium</keyword>
<keyword id="KW-0464">Manganese</keyword>
<keyword id="KW-0479">Metal-binding</keyword>
<keyword id="KW-0576">Peroxisome</keyword>
<keyword id="KW-0904">Protein phosphatase</keyword>
<keyword id="KW-1185">Reference proteome</keyword>
<keyword id="KW-0346">Stress response</keyword>
<accession>P35182</accession>
<accession>D6VRY2</accession>
<comment type="function">
    <text evidence="6 7">Serine and threonine phosphatase (PubMed:8196609, PubMed:8395005). Involved in tRNA splicing and cell separation (PubMed:8196609).</text>
</comment>
<comment type="catalytic activity">
    <reaction evidence="7 9">
        <text>O-phospho-L-seryl-[protein] + H2O = L-seryl-[protein] + phosphate</text>
        <dbReference type="Rhea" id="RHEA:20629"/>
        <dbReference type="Rhea" id="RHEA-COMP:9863"/>
        <dbReference type="Rhea" id="RHEA-COMP:11604"/>
        <dbReference type="ChEBI" id="CHEBI:15377"/>
        <dbReference type="ChEBI" id="CHEBI:29999"/>
        <dbReference type="ChEBI" id="CHEBI:43474"/>
        <dbReference type="ChEBI" id="CHEBI:83421"/>
        <dbReference type="EC" id="3.1.3.16"/>
    </reaction>
    <physiologicalReaction direction="left-to-right" evidence="6 7">
        <dbReference type="Rhea" id="RHEA:20630"/>
    </physiologicalReaction>
</comment>
<comment type="catalytic activity">
    <reaction evidence="9 10">
        <text>O-phospho-L-threonyl-[protein] + H2O = L-threonyl-[protein] + phosphate</text>
        <dbReference type="Rhea" id="RHEA:47004"/>
        <dbReference type="Rhea" id="RHEA-COMP:11060"/>
        <dbReference type="Rhea" id="RHEA-COMP:11605"/>
        <dbReference type="ChEBI" id="CHEBI:15377"/>
        <dbReference type="ChEBI" id="CHEBI:30013"/>
        <dbReference type="ChEBI" id="CHEBI:43474"/>
        <dbReference type="ChEBI" id="CHEBI:61977"/>
        <dbReference type="EC" id="3.1.3.16"/>
    </reaction>
</comment>
<comment type="cofactor">
    <cofactor evidence="6 7">
        <name>Mg(2+)</name>
        <dbReference type="ChEBI" id="CHEBI:18420"/>
    </cofactor>
    <cofactor evidence="6 7">
        <name>Mn(2+)</name>
        <dbReference type="ChEBI" id="CHEBI:29035"/>
    </cofactor>
    <text evidence="2 6">Binds 2 magnesium or manganese ions per subunit. Manganese is about 20 times more efficient than magnesium (By similarity). Also has activity with calcium (PubMed:8196609).</text>
</comment>
<comment type="subunit">
    <text evidence="4">Interacts with NBP2 and PBS2.</text>
</comment>
<comment type="interaction">
    <interactant intactId="EBI-12784">
        <id>P35182</id>
    </interactant>
    <interactant intactId="EBI-34713">
        <id>Q12163</id>
        <label>NBP2</label>
    </interactant>
    <organismsDiffer>false</organismsDiffer>
    <experiments>4</experiments>
</comment>
<comment type="subcellular location">
    <subcellularLocation>
        <location evidence="5">Peroxisome</location>
    </subcellularLocation>
    <text evidence="5">Peroxisomal localization is dependent on PEX5.</text>
</comment>
<comment type="miscellaneous">
    <text evidence="3">Present with 1520 molecules/cell in log phase SD medium.</text>
</comment>
<comment type="similarity">
    <text evidence="8">Belongs to the PP2C family.</text>
</comment>
<feature type="chain" id="PRO_0000057774" description="Protein phosphatase 2C homolog 1">
    <location>
        <begin position="1"/>
        <end position="281"/>
    </location>
</feature>
<feature type="domain" description="PPM-type phosphatase" evidence="2">
    <location>
        <begin position="20"/>
        <end position="281"/>
    </location>
</feature>
<feature type="binding site" evidence="1">
    <location>
        <position position="58"/>
    </location>
    <ligand>
        <name>Mn(2+)</name>
        <dbReference type="ChEBI" id="CHEBI:29035"/>
        <label>1</label>
    </ligand>
</feature>
<feature type="binding site" evidence="1">
    <location>
        <position position="58"/>
    </location>
    <ligand>
        <name>Mn(2+)</name>
        <dbReference type="ChEBI" id="CHEBI:29035"/>
        <label>2</label>
    </ligand>
</feature>
<feature type="binding site" evidence="1">
    <location>
        <position position="59"/>
    </location>
    <ligand>
        <name>Mn(2+)</name>
        <dbReference type="ChEBI" id="CHEBI:29035"/>
        <label>1</label>
    </ligand>
</feature>
<feature type="binding site" evidence="1">
    <location>
        <position position="233"/>
    </location>
    <ligand>
        <name>Mn(2+)</name>
        <dbReference type="ChEBI" id="CHEBI:29035"/>
        <label>2</label>
    </ligand>
</feature>
<feature type="binding site" evidence="1">
    <location>
        <position position="272"/>
    </location>
    <ligand>
        <name>Mn(2+)</name>
        <dbReference type="ChEBI" id="CHEBI:29035"/>
        <label>2</label>
    </ligand>
</feature>
<feature type="sequence conflict" description="In Ref. 2." evidence="8" ref="2">
    <original>Y</original>
    <variation>G</variation>
    <location>
        <position position="53"/>
    </location>
</feature>
<feature type="sequence conflict" description="In Ref. 2." evidence="8" ref="2">
    <original>E</original>
    <variation>Q</variation>
    <location>
        <position position="124"/>
    </location>
</feature>
<sequence>MSNHSEILERPETPYDITYRVGVAENKNSKFRRTMEDVHTYVKNFASRLDWGYFAVFDGHAGIQASKWCGKHLHTIIEQNILADETRDVRDVLNDSFLAIDEEINTKLVGNSGCTAAVCVLRWELPDSVSDDSMDLAQHQRKLYTANVGDSRIVLFRNGNSIRLTYDHKASDTLEMQRVEQAGGLIMKSRVNGMLAVTRSLGDKFFDSLVVGSPFTTSVEITSEDKFLILACDGLWDVIDDQDACELIKDITEPNEAAKVLVRYALENGTTDNVTVMVVFL</sequence>
<proteinExistence type="evidence at protein level"/>
<organism>
    <name type="scientific">Saccharomyces cerevisiae (strain ATCC 204508 / S288c)</name>
    <name type="common">Baker's yeast</name>
    <dbReference type="NCBI Taxonomy" id="559292"/>
    <lineage>
        <taxon>Eukaryota</taxon>
        <taxon>Fungi</taxon>
        <taxon>Dikarya</taxon>
        <taxon>Ascomycota</taxon>
        <taxon>Saccharomycotina</taxon>
        <taxon>Saccharomycetes</taxon>
        <taxon>Saccharomycetales</taxon>
        <taxon>Saccharomycetaceae</taxon>
        <taxon>Saccharomyces</taxon>
    </lineage>
</organism>
<evidence type="ECO:0000250" key="1">
    <source>
        <dbReference type="UniProtKB" id="P35813"/>
    </source>
</evidence>
<evidence type="ECO:0000255" key="2">
    <source>
        <dbReference type="PROSITE-ProRule" id="PRU01082"/>
    </source>
</evidence>
<evidence type="ECO:0000269" key="3">
    <source>
    </source>
</evidence>
<evidence type="ECO:0000269" key="4">
    <source>
    </source>
</evidence>
<evidence type="ECO:0000269" key="5">
    <source>
    </source>
</evidence>
<evidence type="ECO:0000269" key="6">
    <source>
    </source>
</evidence>
<evidence type="ECO:0000269" key="7">
    <source>
    </source>
</evidence>
<evidence type="ECO:0000305" key="8"/>
<evidence type="ECO:0000305" key="9">
    <source>
    </source>
</evidence>
<evidence type="ECO:0000305" key="10">
    <source>
    </source>
</evidence>
<reference key="1">
    <citation type="journal article" date="1993" name="Mol. Cell. Biol.">
        <title>Mutations in a protein tyrosine phosphatase gene (PTP2) and a protein serine/threonine phosphatase gene (PTC1) cause a synthetic growth defect in Saccharomyces cerevisiae.</title>
        <authorList>
            <person name="Maeda T."/>
            <person name="Tsai A.Y.M."/>
            <person name="Saito H."/>
        </authorList>
    </citation>
    <scope>NUCLEOTIDE SEQUENCE [GENOMIC DNA]</scope>
    <scope>FUNCTION</scope>
    <scope>CATALYTIC ACTIVITY</scope>
    <scope>COFACTOR</scope>
</reference>
<reference key="2">
    <citation type="journal article" date="1994" name="Mol. Cell. Biol.">
        <title>TPD1 of Saccharomyces cerevisiae encodes a protein phosphatase 2C-like activity implicated in tRNA splicing and cell separation.</title>
        <authorList>
            <person name="Robinson M.K."/>
            <person name="van Zyl W.H."/>
            <person name="Phizicky E.M."/>
            <person name="Broach J.R."/>
        </authorList>
    </citation>
    <scope>NUCLEOTIDE SEQUENCE [GENOMIC DNA]</scope>
    <scope>FUNCTION</scope>
    <scope>CATALYTIC ACTIVITY</scope>
    <scope>COFACTOR</scope>
</reference>
<reference key="3">
    <citation type="journal article" date="1997" name="Nature">
        <title>The nucleotide sequence of Saccharomyces cerevisiae chromosome IV.</title>
        <authorList>
            <person name="Jacq C."/>
            <person name="Alt-Moerbe J."/>
            <person name="Andre B."/>
            <person name="Arnold W."/>
            <person name="Bahr A."/>
            <person name="Ballesta J.P.G."/>
            <person name="Bargues M."/>
            <person name="Baron L."/>
            <person name="Becker A."/>
            <person name="Biteau N."/>
            <person name="Bloecker H."/>
            <person name="Blugeon C."/>
            <person name="Boskovic J."/>
            <person name="Brandt P."/>
            <person name="Brueckner M."/>
            <person name="Buitrago M.J."/>
            <person name="Coster F."/>
            <person name="Delaveau T."/>
            <person name="del Rey F."/>
            <person name="Dujon B."/>
            <person name="Eide L.G."/>
            <person name="Garcia-Cantalejo J.M."/>
            <person name="Goffeau A."/>
            <person name="Gomez-Peris A."/>
            <person name="Granotier C."/>
            <person name="Hanemann V."/>
            <person name="Hankeln T."/>
            <person name="Hoheisel J.D."/>
            <person name="Jaeger W."/>
            <person name="Jimenez A."/>
            <person name="Jonniaux J.-L."/>
            <person name="Kraemer C."/>
            <person name="Kuester H."/>
            <person name="Laamanen P."/>
            <person name="Legros Y."/>
            <person name="Louis E.J."/>
            <person name="Moeller-Rieker S."/>
            <person name="Monnet A."/>
            <person name="Moro M."/>
            <person name="Mueller-Auer S."/>
            <person name="Nussbaumer B."/>
            <person name="Paricio N."/>
            <person name="Paulin L."/>
            <person name="Perea J."/>
            <person name="Perez-Alonso M."/>
            <person name="Perez-Ortin J.E."/>
            <person name="Pohl T.M."/>
            <person name="Prydz H."/>
            <person name="Purnelle B."/>
            <person name="Rasmussen S.W."/>
            <person name="Remacha M.A."/>
            <person name="Revuelta J.L."/>
            <person name="Rieger M."/>
            <person name="Salom D."/>
            <person name="Saluz H.P."/>
            <person name="Saiz J.E."/>
            <person name="Saren A.-M."/>
            <person name="Schaefer M."/>
            <person name="Scharfe M."/>
            <person name="Schmidt E.R."/>
            <person name="Schneider C."/>
            <person name="Scholler P."/>
            <person name="Schwarz S."/>
            <person name="Soler-Mira A."/>
            <person name="Urrestarazu L.A."/>
            <person name="Verhasselt P."/>
            <person name="Vissers S."/>
            <person name="Voet M."/>
            <person name="Volckaert G."/>
            <person name="Wagner G."/>
            <person name="Wambutt R."/>
            <person name="Wedler E."/>
            <person name="Wedler H."/>
            <person name="Woelfl S."/>
            <person name="Harris D.E."/>
            <person name="Bowman S."/>
            <person name="Brown D."/>
            <person name="Churcher C.M."/>
            <person name="Connor R."/>
            <person name="Dedman K."/>
            <person name="Gentles S."/>
            <person name="Hamlin N."/>
            <person name="Hunt S."/>
            <person name="Jones L."/>
            <person name="McDonald S."/>
            <person name="Murphy L.D."/>
            <person name="Niblett D."/>
            <person name="Odell C."/>
            <person name="Oliver K."/>
            <person name="Rajandream M.A."/>
            <person name="Richards C."/>
            <person name="Shore L."/>
            <person name="Walsh S.V."/>
            <person name="Barrell B.G."/>
            <person name="Dietrich F.S."/>
            <person name="Mulligan J.T."/>
            <person name="Allen E."/>
            <person name="Araujo R."/>
            <person name="Aviles E."/>
            <person name="Berno A."/>
            <person name="Carpenter J."/>
            <person name="Chen E."/>
            <person name="Cherry J.M."/>
            <person name="Chung E."/>
            <person name="Duncan M."/>
            <person name="Hunicke-Smith S."/>
            <person name="Hyman R.W."/>
            <person name="Komp C."/>
            <person name="Lashkari D."/>
            <person name="Lew H."/>
            <person name="Lin D."/>
            <person name="Mosedale D."/>
            <person name="Nakahara K."/>
            <person name="Namath A."/>
            <person name="Oefner P."/>
            <person name="Oh C."/>
            <person name="Petel F.X."/>
            <person name="Roberts D."/>
            <person name="Schramm S."/>
            <person name="Schroeder M."/>
            <person name="Shogren T."/>
            <person name="Shroff N."/>
            <person name="Winant A."/>
            <person name="Yelton M.A."/>
            <person name="Botstein D."/>
            <person name="Davis R.W."/>
            <person name="Johnston M."/>
            <person name="Andrews S."/>
            <person name="Brinkman R."/>
            <person name="Cooper J."/>
            <person name="Ding H."/>
            <person name="Du Z."/>
            <person name="Favello A."/>
            <person name="Fulton L."/>
            <person name="Gattung S."/>
            <person name="Greco T."/>
            <person name="Hallsworth K."/>
            <person name="Hawkins J."/>
            <person name="Hillier L.W."/>
            <person name="Jier M."/>
            <person name="Johnson D."/>
            <person name="Johnston L."/>
            <person name="Kirsten J."/>
            <person name="Kucaba T."/>
            <person name="Langston Y."/>
            <person name="Latreille P."/>
            <person name="Le T."/>
            <person name="Mardis E."/>
            <person name="Menezes S."/>
            <person name="Miller N."/>
            <person name="Nhan M."/>
            <person name="Pauley A."/>
            <person name="Peluso D."/>
            <person name="Rifkin L."/>
            <person name="Riles L."/>
            <person name="Taich A."/>
            <person name="Trevaskis E."/>
            <person name="Vignati D."/>
            <person name="Wilcox L."/>
            <person name="Wohldman P."/>
            <person name="Vaudin M."/>
            <person name="Wilson R."/>
            <person name="Waterston R."/>
            <person name="Albermann K."/>
            <person name="Hani J."/>
            <person name="Heumann K."/>
            <person name="Kleine K."/>
            <person name="Mewes H.-W."/>
            <person name="Zollner A."/>
            <person name="Zaccaria P."/>
        </authorList>
    </citation>
    <scope>NUCLEOTIDE SEQUENCE [LARGE SCALE GENOMIC DNA]</scope>
    <source>
        <strain>ATCC 204508 / S288c</strain>
    </source>
</reference>
<reference key="4">
    <citation type="journal article" date="2014" name="G3 (Bethesda)">
        <title>The reference genome sequence of Saccharomyces cerevisiae: Then and now.</title>
        <authorList>
            <person name="Engel S.R."/>
            <person name="Dietrich F.S."/>
            <person name="Fisk D.G."/>
            <person name="Binkley G."/>
            <person name="Balakrishnan R."/>
            <person name="Costanzo M.C."/>
            <person name="Dwight S.S."/>
            <person name="Hitz B.C."/>
            <person name="Karra K."/>
            <person name="Nash R.S."/>
            <person name="Weng S."/>
            <person name="Wong E.D."/>
            <person name="Lloyd P."/>
            <person name="Skrzypek M.S."/>
            <person name="Miyasato S.R."/>
            <person name="Simison M."/>
            <person name="Cherry J.M."/>
        </authorList>
    </citation>
    <scope>GENOME REANNOTATION</scope>
    <source>
        <strain>ATCC 204508 / S288c</strain>
    </source>
</reference>
<reference key="5">
    <citation type="journal article" date="2003" name="Nature">
        <title>Global analysis of protein expression in yeast.</title>
        <authorList>
            <person name="Ghaemmaghami S."/>
            <person name="Huh W.-K."/>
            <person name="Bower K."/>
            <person name="Howson R.W."/>
            <person name="Belle A."/>
            <person name="Dephoure N."/>
            <person name="O'Shea E.K."/>
            <person name="Weissman J.S."/>
        </authorList>
    </citation>
    <scope>LEVEL OF PROTEIN EXPRESSION [LARGE SCALE ANALYSIS]</scope>
</reference>
<reference key="6">
    <citation type="journal article" date="2004" name="EMBO J.">
        <title>Nbp2 targets the Ptc1-type 2C Ser/Thr phosphatase to the HOG MAPK pathway.</title>
        <authorList>
            <person name="Mapes J."/>
            <person name="Ota I.M."/>
        </authorList>
    </citation>
    <scope>INTERACTION WITH NBP2 AND PBS2</scope>
</reference>
<reference key="7">
    <citation type="journal article" date="2022" name="Cells">
        <title>Pls1 Is a Peroxisomal Matrix Protein with a Role in Regulating Lysine Biosynthesis.</title>
        <authorList>
            <person name="David Y."/>
            <person name="Castro I.G."/>
            <person name="Yifrach E."/>
            <person name="Bibi C."/>
            <person name="Katawi E."/>
            <person name="Yahav Har-Shai D."/>
            <person name="Brodsky S."/>
            <person name="Barkai N."/>
            <person name="Ravid T."/>
            <person name="Eisenstein M."/>
            <person name="Pietrokovski S."/>
            <person name="Schuldiner M."/>
            <person name="Zalckvar E."/>
        </authorList>
    </citation>
    <scope>SUBCELLULAR LOCATION</scope>
</reference>
<protein>
    <recommendedName>
        <fullName>Protein phosphatase 2C homolog 1</fullName>
        <shortName>PP2C-1</shortName>
        <ecNumber evidence="6 7">3.1.3.16</ecNumber>
    </recommendedName>
</protein>
<gene>
    <name type="primary">PTC1</name>
    <name type="synonym">TPD1</name>
    <name type="ordered locus">YDL006W</name>
    <name type="ORF">D2925</name>
</gene>
<dbReference type="EC" id="3.1.3.16" evidence="6 7"/>
<dbReference type="EMBL" id="L14593">
    <property type="protein sequence ID" value="AAA34920.1"/>
    <property type="molecule type" value="Genomic_DNA"/>
</dbReference>
<dbReference type="EMBL" id="Z48432">
    <property type="protein sequence ID" value="CAA88353.1"/>
    <property type="molecule type" value="Genomic_DNA"/>
</dbReference>
<dbReference type="EMBL" id="Z74054">
    <property type="protein sequence ID" value="CAA98562.1"/>
    <property type="molecule type" value="Genomic_DNA"/>
</dbReference>
<dbReference type="EMBL" id="Z48008">
    <property type="protein sequence ID" value="CAA88055.1"/>
    <property type="molecule type" value="Genomic_DNA"/>
</dbReference>
<dbReference type="EMBL" id="BK006938">
    <property type="protein sequence ID" value="DAA11842.1"/>
    <property type="molecule type" value="Genomic_DNA"/>
</dbReference>
<dbReference type="PIR" id="S41854">
    <property type="entry name" value="S41854"/>
</dbReference>
<dbReference type="RefSeq" id="NP_010278.3">
    <property type="nucleotide sequence ID" value="NM_001180065.3"/>
</dbReference>
<dbReference type="SMR" id="P35182"/>
<dbReference type="BioGRID" id="32048">
    <property type="interactions" value="840"/>
</dbReference>
<dbReference type="DIP" id="DIP-1537N"/>
<dbReference type="FunCoup" id="P35182">
    <property type="interactions" value="402"/>
</dbReference>
<dbReference type="IntAct" id="P35182">
    <property type="interactions" value="13"/>
</dbReference>
<dbReference type="MINT" id="P35182"/>
<dbReference type="STRING" id="4932.YDL006W"/>
<dbReference type="iPTMnet" id="P35182"/>
<dbReference type="PaxDb" id="4932-YDL006W"/>
<dbReference type="PeptideAtlas" id="P35182"/>
<dbReference type="EnsemblFungi" id="YDL006W_mRNA">
    <property type="protein sequence ID" value="YDL006W"/>
    <property type="gene ID" value="YDL006W"/>
</dbReference>
<dbReference type="GeneID" id="851558"/>
<dbReference type="KEGG" id="sce:YDL006W"/>
<dbReference type="AGR" id="SGD:S000002164"/>
<dbReference type="SGD" id="S000002164">
    <property type="gene designation" value="PTC1"/>
</dbReference>
<dbReference type="VEuPathDB" id="FungiDB:YDL006W"/>
<dbReference type="eggNOG" id="KOG0698">
    <property type="taxonomic scope" value="Eukaryota"/>
</dbReference>
<dbReference type="GeneTree" id="ENSGT00940000158427"/>
<dbReference type="HOGENOM" id="CLU_013173_1_1_1"/>
<dbReference type="InParanoid" id="P35182"/>
<dbReference type="OMA" id="IDDQEAC"/>
<dbReference type="OrthoDB" id="10264738at2759"/>
<dbReference type="BioCyc" id="YEAST:G3O-29437-MONOMER"/>
<dbReference type="BioGRID-ORCS" id="851558">
    <property type="hits" value="2 hits in 10 CRISPR screens"/>
</dbReference>
<dbReference type="PRO" id="PR:P35182"/>
<dbReference type="Proteomes" id="UP000002311">
    <property type="component" value="Chromosome IV"/>
</dbReference>
<dbReference type="RNAct" id="P35182">
    <property type="molecule type" value="protein"/>
</dbReference>
<dbReference type="GO" id="GO:0005737">
    <property type="term" value="C:cytoplasm"/>
    <property type="evidence" value="ECO:0000314"/>
    <property type="project" value="SGD"/>
</dbReference>
<dbReference type="GO" id="GO:0005634">
    <property type="term" value="C:nucleus"/>
    <property type="evidence" value="ECO:0000314"/>
    <property type="project" value="SGD"/>
</dbReference>
<dbReference type="GO" id="GO:0005777">
    <property type="term" value="C:peroxisome"/>
    <property type="evidence" value="ECO:0000314"/>
    <property type="project" value="SGD"/>
</dbReference>
<dbReference type="GO" id="GO:1990439">
    <property type="term" value="F:MAP kinase serine/threonine phosphatase activity"/>
    <property type="evidence" value="ECO:0000314"/>
    <property type="project" value="SGD"/>
</dbReference>
<dbReference type="GO" id="GO:0046872">
    <property type="term" value="F:metal ion binding"/>
    <property type="evidence" value="ECO:0007669"/>
    <property type="project" value="UniProtKB-KW"/>
</dbReference>
<dbReference type="GO" id="GO:0004722">
    <property type="term" value="F:protein serine/threonine phosphatase activity"/>
    <property type="evidence" value="ECO:0000314"/>
    <property type="project" value="SGD"/>
</dbReference>
<dbReference type="GO" id="GO:0071852">
    <property type="term" value="P:fungal-type cell wall organization or biogenesis"/>
    <property type="evidence" value="ECO:0000315"/>
    <property type="project" value="SGD"/>
</dbReference>
<dbReference type="GO" id="GO:0000001">
    <property type="term" value="P:mitochondrion inheritance"/>
    <property type="evidence" value="ECO:0000315"/>
    <property type="project" value="SGD"/>
</dbReference>
<dbReference type="GO" id="GO:0043409">
    <property type="term" value="P:negative regulation of MAPK cascade"/>
    <property type="evidence" value="ECO:0000315"/>
    <property type="project" value="SGD"/>
</dbReference>
<dbReference type="GO" id="GO:0000750">
    <property type="term" value="P:pheromone-dependent signal transduction involved in conjugation with cellular fusion"/>
    <property type="evidence" value="ECO:0000315"/>
    <property type="project" value="SGD"/>
</dbReference>
<dbReference type="GO" id="GO:0007165">
    <property type="term" value="P:signal transduction"/>
    <property type="evidence" value="ECO:0000318"/>
    <property type="project" value="GO_Central"/>
</dbReference>
<dbReference type="GO" id="GO:0006388">
    <property type="term" value="P:tRNA splicing, via endonucleolytic cleavage and ligation"/>
    <property type="evidence" value="ECO:0000315"/>
    <property type="project" value="SGD"/>
</dbReference>
<dbReference type="CDD" id="cd00143">
    <property type="entry name" value="PP2Cc"/>
    <property type="match status" value="1"/>
</dbReference>
<dbReference type="FunFam" id="3.60.40.10:FF:000054">
    <property type="entry name" value="Protein phosphatase type 2C"/>
    <property type="match status" value="1"/>
</dbReference>
<dbReference type="Gene3D" id="3.60.40.10">
    <property type="entry name" value="PPM-type phosphatase domain"/>
    <property type="match status" value="1"/>
</dbReference>
<dbReference type="InterPro" id="IPR015655">
    <property type="entry name" value="PP2C"/>
</dbReference>
<dbReference type="InterPro" id="IPR000222">
    <property type="entry name" value="PP2C_BS"/>
</dbReference>
<dbReference type="InterPro" id="IPR036457">
    <property type="entry name" value="PPM-type-like_dom_sf"/>
</dbReference>
<dbReference type="InterPro" id="IPR001932">
    <property type="entry name" value="PPM-type_phosphatase-like_dom"/>
</dbReference>
<dbReference type="PANTHER" id="PTHR13832">
    <property type="entry name" value="PROTEIN PHOSPHATASE 2C"/>
    <property type="match status" value="1"/>
</dbReference>
<dbReference type="PANTHER" id="PTHR13832:SF837">
    <property type="entry name" value="PROTEIN PHOSPHATASE 2C-LIKE DOMAIN-CONTAINING PROTEIN 1"/>
    <property type="match status" value="1"/>
</dbReference>
<dbReference type="Pfam" id="PF00481">
    <property type="entry name" value="PP2C"/>
    <property type="match status" value="1"/>
</dbReference>
<dbReference type="SMART" id="SM00331">
    <property type="entry name" value="PP2C_SIG"/>
    <property type="match status" value="1"/>
</dbReference>
<dbReference type="SMART" id="SM00332">
    <property type="entry name" value="PP2Cc"/>
    <property type="match status" value="1"/>
</dbReference>
<dbReference type="SUPFAM" id="SSF81606">
    <property type="entry name" value="PP2C-like"/>
    <property type="match status" value="1"/>
</dbReference>
<dbReference type="PROSITE" id="PS01032">
    <property type="entry name" value="PPM_1"/>
    <property type="match status" value="1"/>
</dbReference>
<dbReference type="PROSITE" id="PS51746">
    <property type="entry name" value="PPM_2"/>
    <property type="match status" value="1"/>
</dbReference>
<name>PP2C1_YEAST</name>